<comment type="function">
    <text evidence="5 6 7">ABC multidrug transporter involved in the response to azoles such as fluconazole, itraconazole, ketoconazole and voriconazole and contributes to the development of PDR1-dependent azole resistance (PubMed:15673750, PubMed:18312269). Plays a role in biofilm tolerance to fluconazole (PubMed:24645630). Also confers resistance to 4-nitroquinoline-N-oxide (4-NQO) (PubMed:18312269).</text>
</comment>
<comment type="subcellular location">
    <subcellularLocation>
        <location evidence="11">Cell membrane</location>
        <topology evidence="1">Multi-pass membrane protein</topology>
    </subcellularLocation>
</comment>
<comment type="induction">
    <text evidence="5 6 7 8 9">Expression is increased in clinical azole-resistant isolates, displaying amounts of transcript increasing from 3.3- to 44.3-fold (PubMed:15673750, PubMed:18312269, PubMed:29464833). Expression is controlled by the pleiotropic drug resistance transcription factor PDR1 (PubMed:18312269, PubMed:29464833). Expression is increased during biofilm growth (PubMed:24645630). The expression levels are significantly down-regulated after exposure to the combination of fluconazole and tacrolimus (FK506) (PubMed:25355935).</text>
</comment>
<comment type="disruption phenotype">
    <text evidence="6">Leads to increased susceptibility to fluconazole (PubMed:18312269). Also leads to increased susceptibility to 4-nitroquinoline-N-oxide (4-NQO) (PubMed:18312269).</text>
</comment>
<comment type="similarity">
    <text evidence="11">Belongs to the ABC transporter superfamily. ABCG family. PDR (TC 3.A.1.205) subfamily.</text>
</comment>
<dbReference type="EMBL" id="CR380955">
    <property type="protein sequence ID" value="CAG60398.1"/>
    <property type="molecule type" value="Genomic_DNA"/>
</dbReference>
<dbReference type="RefSeq" id="XP_447461.1">
    <property type="nucleotide sequence ID" value="XM_447461.1"/>
</dbReference>
<dbReference type="SMR" id="Q6FQN3"/>
<dbReference type="FunCoup" id="Q6FQN3">
    <property type="interactions" value="278"/>
</dbReference>
<dbReference type="STRING" id="284593.Q6FQN3"/>
<dbReference type="GlyCosmos" id="Q6FQN3">
    <property type="glycosylation" value="7 sites, No reported glycans"/>
</dbReference>
<dbReference type="EnsemblFungi" id="CAGL0I04862g-T">
    <property type="protein sequence ID" value="CAGL0I04862g-T-p1"/>
    <property type="gene ID" value="CAGL0I04862g"/>
</dbReference>
<dbReference type="GeneID" id="2889250"/>
<dbReference type="KEGG" id="cgr:2889250"/>
<dbReference type="CGD" id="CAL0132132">
    <property type="gene designation" value="SNQ2"/>
</dbReference>
<dbReference type="VEuPathDB" id="FungiDB:B1J91_I04862g"/>
<dbReference type="VEuPathDB" id="FungiDB:CAGL0I04862g"/>
<dbReference type="eggNOG" id="KOG0065">
    <property type="taxonomic scope" value="Eukaryota"/>
</dbReference>
<dbReference type="HOGENOM" id="CLU_000604_35_0_1"/>
<dbReference type="InParanoid" id="Q6FQN3"/>
<dbReference type="OMA" id="FAHRCCG"/>
<dbReference type="Proteomes" id="UP000002428">
    <property type="component" value="Chromosome I"/>
</dbReference>
<dbReference type="GO" id="GO:0005886">
    <property type="term" value="C:plasma membrane"/>
    <property type="evidence" value="ECO:0000316"/>
    <property type="project" value="CGD"/>
</dbReference>
<dbReference type="GO" id="GO:0008559">
    <property type="term" value="F:ABC-type xenobiotic transporter activity"/>
    <property type="evidence" value="ECO:0000316"/>
    <property type="project" value="CGD"/>
</dbReference>
<dbReference type="GO" id="GO:0005524">
    <property type="term" value="F:ATP binding"/>
    <property type="evidence" value="ECO:0007669"/>
    <property type="project" value="UniProtKB-KW"/>
</dbReference>
<dbReference type="GO" id="GO:0016887">
    <property type="term" value="F:ATP hydrolysis activity"/>
    <property type="evidence" value="ECO:0007669"/>
    <property type="project" value="InterPro"/>
</dbReference>
<dbReference type="GO" id="GO:0071466">
    <property type="term" value="P:cellular response to xenobiotic stimulus"/>
    <property type="evidence" value="ECO:0007669"/>
    <property type="project" value="EnsemblFungi"/>
</dbReference>
<dbReference type="GO" id="GO:0009410">
    <property type="term" value="P:response to xenobiotic stimulus"/>
    <property type="evidence" value="ECO:0000247"/>
    <property type="project" value="CGD"/>
</dbReference>
<dbReference type="GO" id="GO:0055092">
    <property type="term" value="P:sterol homeostasis"/>
    <property type="evidence" value="ECO:0007669"/>
    <property type="project" value="EnsemblFungi"/>
</dbReference>
<dbReference type="GO" id="GO:1990961">
    <property type="term" value="P:xenobiotic detoxification by transmembrane export across the plasma membrane"/>
    <property type="evidence" value="ECO:0007669"/>
    <property type="project" value="InterPro"/>
</dbReference>
<dbReference type="CDD" id="cd03233">
    <property type="entry name" value="ABCG_PDR_domain1"/>
    <property type="match status" value="1"/>
</dbReference>
<dbReference type="CDD" id="cd03232">
    <property type="entry name" value="ABCG_PDR_domain2"/>
    <property type="match status" value="1"/>
</dbReference>
<dbReference type="FunFam" id="3.40.50.300:FF:000054">
    <property type="entry name" value="ABC multidrug transporter atrF"/>
    <property type="match status" value="1"/>
</dbReference>
<dbReference type="FunFam" id="3.40.50.300:FF:001460">
    <property type="entry name" value="ATP-binding cassette transporter"/>
    <property type="match status" value="1"/>
</dbReference>
<dbReference type="Gene3D" id="3.40.50.300">
    <property type="entry name" value="P-loop containing nucleotide triphosphate hydrolases"/>
    <property type="match status" value="2"/>
</dbReference>
<dbReference type="InterPro" id="IPR003593">
    <property type="entry name" value="AAA+_ATPase"/>
</dbReference>
<dbReference type="InterPro" id="IPR013525">
    <property type="entry name" value="ABC2_TM"/>
</dbReference>
<dbReference type="InterPro" id="IPR029481">
    <property type="entry name" value="ABC_trans_N"/>
</dbReference>
<dbReference type="InterPro" id="IPR003439">
    <property type="entry name" value="ABC_transporter-like_ATP-bd"/>
</dbReference>
<dbReference type="InterPro" id="IPR017871">
    <property type="entry name" value="ABC_transporter-like_CS"/>
</dbReference>
<dbReference type="InterPro" id="IPR043926">
    <property type="entry name" value="ABCG_dom"/>
</dbReference>
<dbReference type="InterPro" id="IPR034001">
    <property type="entry name" value="ABCG_PDR_1"/>
</dbReference>
<dbReference type="InterPro" id="IPR034003">
    <property type="entry name" value="ABCG_PDR_2"/>
</dbReference>
<dbReference type="InterPro" id="IPR005285">
    <property type="entry name" value="Drug-R_PDR/CDR"/>
</dbReference>
<dbReference type="InterPro" id="IPR027417">
    <property type="entry name" value="P-loop_NTPase"/>
</dbReference>
<dbReference type="InterPro" id="IPR010929">
    <property type="entry name" value="PDR_CDR_ABC"/>
</dbReference>
<dbReference type="NCBIfam" id="TIGR00956">
    <property type="entry name" value="3a01205"/>
    <property type="match status" value="1"/>
</dbReference>
<dbReference type="PANTHER" id="PTHR19241">
    <property type="entry name" value="ATP-BINDING CASSETTE TRANSPORTER"/>
    <property type="match status" value="1"/>
</dbReference>
<dbReference type="Pfam" id="PF01061">
    <property type="entry name" value="ABC2_membrane"/>
    <property type="match status" value="2"/>
</dbReference>
<dbReference type="Pfam" id="PF19055">
    <property type="entry name" value="ABC2_membrane_7"/>
    <property type="match status" value="1"/>
</dbReference>
<dbReference type="Pfam" id="PF00005">
    <property type="entry name" value="ABC_tran"/>
    <property type="match status" value="2"/>
</dbReference>
<dbReference type="Pfam" id="PF14510">
    <property type="entry name" value="ABC_trans_N"/>
    <property type="match status" value="1"/>
</dbReference>
<dbReference type="Pfam" id="PF06422">
    <property type="entry name" value="PDR_CDR"/>
    <property type="match status" value="1"/>
</dbReference>
<dbReference type="SMART" id="SM00382">
    <property type="entry name" value="AAA"/>
    <property type="match status" value="2"/>
</dbReference>
<dbReference type="SUPFAM" id="SSF52540">
    <property type="entry name" value="P-loop containing nucleoside triphosphate hydrolases"/>
    <property type="match status" value="2"/>
</dbReference>
<dbReference type="PROSITE" id="PS00211">
    <property type="entry name" value="ABC_TRANSPORTER_1"/>
    <property type="match status" value="1"/>
</dbReference>
<dbReference type="PROSITE" id="PS50893">
    <property type="entry name" value="ABC_TRANSPORTER_2"/>
    <property type="match status" value="2"/>
</dbReference>
<sequence>MSSSSEISVAGSDVSFEGRLTQHGRHEETPADQLTKILSGRSHEDADGDDAHSDNRSILSRSRRSSTAELSPEMVGRVQSLADVLSRHTSRSGGNIDLSQLSESDRFDAERIIGSFVRDADEQGIHLRKAGVTLEHVSARGADSTAMEGATFGNVLCLPYTIYKAIRDKSGSKMRTILNDVSGLARAGEMVLVLGRPGAGCSSMLKVTAGEIDQFAGGVEGEIMYDGIPQKEMMKRYKPDVIYNGEQDVHFPHLTVQQTLDFAIACKTPSKRVNDVSREEYIASTRDLHATIFGLRHTYHTKVGNDFVRGVSGGERKRVSIAEALVTKGSIYCWDNATRGLDASTALEYAKAIRITTNLLGSTAFVTIYQASENIYETFDKVTVLYTGRQIYFGPIDEAKDYFYRMGYECPPRQVTAEFLTALTDVNGYHKIRPGYENKVPRTAEEFERYWQESPEYRQLLIDIDQYKKEIDTEKTKEIYDQSMQQEKSKHARKKSYYTVSFWEQIRLCTKRGFQRIYGDKAYTVITICSAIIQSLVSGSLYYNTPSSTSGAFSRGGVLYFCLLYYSLMGLANLSFEHRPILQKHKIYSLYHPAAEALGSTIANFPFRMIGMTCFLIIIYFLSGLNRTASSFFRVYLFLTMCSESINALFELIAAGCDNISQANSISGIVMMSISLYSTYMIQLPSMRPWFKWISYILPIRYAFESMLLAEFHGRHMGCGGTLVPSGPGYENIASENQVCAFVGSKPGQSWVLGDDYLRLQFEYEYKHEWRNFGIMWCFLLGYIALKALITEIKRPVKGGGDALIFKKGTRKYHMKLDEEDGELHEIDTKEKFSSRSGSSTTSEDEIFEELESKGIFIWRNVCYTIPYDGGMRQLLDNVSGFCKPGTLTALMGESGAGKTTLLNTLAQRNVGIITGDMLVNGKPIDISFERRTGYVQQQDIHISELTVRESLQFSARMRRAQNVPEEEKMEHVERIIKVLDMEEYADALVGDVGRGLNVEQRKKLSIGVELVAKPDLLLFLDEPTSGLDSQSSWAIVQLLKKLAKAGQSILCTIHQPSATLFEEFDRLLLLKKGGQTVYFGDIGDNSKTLLSYFERNGARKCSPSENPAEYILEAIGAGATASVTEDWHQIWKNSDEFISTEKEVDHLIDQLSNQKTESEFGDAPTKYATSYAYQFKWVLIRTSMSLWRNLDYIMSKMMLMTVGGLYIGFTFYDPGDSYTGLQNTLFAAFISIILSAPAMNQIQARAIAARELFEVRESKSNMFHWSLLLITQYLSEIPYHFLFSAIFFVSSYFPLRTHFQASASAVYYLNYSIMFQLYYIGFGLCVLYMAPNLQSANVILGLCLSFLIAFCGVVQPVSLMPGFWTFMWKTSPYTYFVQNMVGILLHNKPVICRKKELSIFDPPAGQTCQEFTQAFLDKRGGYIANPNATTACEYCIYEVGDDYLKHISASYSYLWRNFGLYWAYIGFNICAMVAIYYIFHVRGVSFKFDRVFKLFSRITRRGKKSN</sequence>
<reference key="1">
    <citation type="journal article" date="2004" name="Nature">
        <title>Genome evolution in yeasts.</title>
        <authorList>
            <person name="Dujon B."/>
            <person name="Sherman D."/>
            <person name="Fischer G."/>
            <person name="Durrens P."/>
            <person name="Casaregola S."/>
            <person name="Lafontaine I."/>
            <person name="de Montigny J."/>
            <person name="Marck C."/>
            <person name="Neuveglise C."/>
            <person name="Talla E."/>
            <person name="Goffard N."/>
            <person name="Frangeul L."/>
            <person name="Aigle M."/>
            <person name="Anthouard V."/>
            <person name="Babour A."/>
            <person name="Barbe V."/>
            <person name="Barnay S."/>
            <person name="Blanchin S."/>
            <person name="Beckerich J.-M."/>
            <person name="Beyne E."/>
            <person name="Bleykasten C."/>
            <person name="Boisrame A."/>
            <person name="Boyer J."/>
            <person name="Cattolico L."/>
            <person name="Confanioleri F."/>
            <person name="de Daruvar A."/>
            <person name="Despons L."/>
            <person name="Fabre E."/>
            <person name="Fairhead C."/>
            <person name="Ferry-Dumazet H."/>
            <person name="Groppi A."/>
            <person name="Hantraye F."/>
            <person name="Hennequin C."/>
            <person name="Jauniaux N."/>
            <person name="Joyet P."/>
            <person name="Kachouri R."/>
            <person name="Kerrest A."/>
            <person name="Koszul R."/>
            <person name="Lemaire M."/>
            <person name="Lesur I."/>
            <person name="Ma L."/>
            <person name="Muller H."/>
            <person name="Nicaud J.-M."/>
            <person name="Nikolski M."/>
            <person name="Oztas S."/>
            <person name="Ozier-Kalogeropoulos O."/>
            <person name="Pellenz S."/>
            <person name="Potier S."/>
            <person name="Richard G.-F."/>
            <person name="Straub M.-L."/>
            <person name="Suleau A."/>
            <person name="Swennen D."/>
            <person name="Tekaia F."/>
            <person name="Wesolowski-Louvel M."/>
            <person name="Westhof E."/>
            <person name="Wirth B."/>
            <person name="Zeniou-Meyer M."/>
            <person name="Zivanovic Y."/>
            <person name="Bolotin-Fukuhara M."/>
            <person name="Thierry A."/>
            <person name="Bouchier C."/>
            <person name="Caudron B."/>
            <person name="Scarpelli C."/>
            <person name="Gaillardin C."/>
            <person name="Weissenbach J."/>
            <person name="Wincker P."/>
            <person name="Souciet J.-L."/>
        </authorList>
    </citation>
    <scope>NUCLEOTIDE SEQUENCE [LARGE SCALE GENOMIC DNA]</scope>
    <source>
        <strain>ATCC 2001 / BCRC 20586 / JCM 3761 / NBRC 0622 / NRRL Y-65 / CBS 138</strain>
    </source>
</reference>
<reference key="2">
    <citation type="journal article" date="2001" name="Antimicrob. Agents Chemother.">
        <title>Role of ATP-binding-cassette transporter genes in high-frequency acquisition of resistance to azole antifungals in Candida glabrata.</title>
        <authorList>
            <person name="Sanglard D."/>
            <person name="Ischer F."/>
            <person name="Bille J."/>
        </authorList>
    </citation>
    <scope>IDENTIFICATION</scope>
</reference>
<reference key="3">
    <citation type="journal article" date="2005" name="Antimicrob. Agents Chemother.">
        <title>Mechanisms of azole resistance in clinical isolates of Candida glabrata collected during a hospital survey of antifungal resistance.</title>
        <authorList>
            <person name="Sanguinetti M."/>
            <person name="Posteraro B."/>
            <person name="Fiori B."/>
            <person name="Ranno S."/>
            <person name="Torelli R."/>
            <person name="Fadda G."/>
        </authorList>
    </citation>
    <scope>FUNCTION</scope>
    <scope>INDUCTION</scope>
</reference>
<reference key="4">
    <citation type="journal article" date="2008" name="Mol. Microbiol.">
        <title>The ATP-binding cassette transporter-encoding gene CgSNQ2 is contributing to the CgPDR1-dependent azole resistance of Candida glabrata.</title>
        <authorList>
            <person name="Torelli R."/>
            <person name="Posteraro B."/>
            <person name="Ferrari S."/>
            <person name="La Sorda M."/>
            <person name="Fadda G."/>
            <person name="Sanglard D."/>
            <person name="Sanguinetti M."/>
        </authorList>
    </citation>
    <scope>INDUCTION</scope>
    <scope>FUNCTION</scope>
    <scope>DISRUPTION PHENOTYPE</scope>
</reference>
<reference key="5">
    <citation type="journal article" date="2014" name="Biofouling">
        <title>Effects of fluconazole on Candida glabrata biofilms and its relationship with ABC transporter gene expression.</title>
        <authorList>
            <person name="Fonseca E."/>
            <person name="Silva S."/>
            <person name="Rodrigues C.F."/>
            <person name="Alves C.T."/>
            <person name="Azeredo J."/>
            <person name="Henriques M."/>
        </authorList>
    </citation>
    <scope>INDUCTION</scope>
    <scope>FUNCTION</scope>
</reference>
<reference key="6">
    <citation type="journal article" date="2015" name="J. Med. Microbiol.">
        <title>Resistance reversal induced by a combination of fluconazole and tacrolimus (FK506) in Candida glabrata.</title>
        <authorList>
            <person name="Li H."/>
            <person name="Chen Z."/>
            <person name="Zhang C."/>
            <person name="Gao Y."/>
            <person name="Zhang X."/>
            <person name="Sun S."/>
        </authorList>
    </citation>
    <scope>INDUCTION</scope>
</reference>
<reference key="7">
    <citation type="journal article" date="2018" name="Mycoses">
        <title>CgPDR1 gain-of-function mutations lead to azole-resistance and increased adhesion in clinical Candida glabrata strains.</title>
        <authorList>
            <person name="Ni Q."/>
            <person name="Wang C."/>
            <person name="Tian Y."/>
            <person name="Dong D."/>
            <person name="Jiang C."/>
            <person name="Mao E."/>
            <person name="Peng Y."/>
        </authorList>
    </citation>
    <scope>INDUCTION</scope>
</reference>
<keyword id="KW-0067">ATP-binding</keyword>
<keyword id="KW-1003">Cell membrane</keyword>
<keyword id="KW-0325">Glycoprotein</keyword>
<keyword id="KW-0472">Membrane</keyword>
<keyword id="KW-0547">Nucleotide-binding</keyword>
<keyword id="KW-1185">Reference proteome</keyword>
<keyword id="KW-0677">Repeat</keyword>
<keyword id="KW-0812">Transmembrane</keyword>
<keyword id="KW-1133">Transmembrane helix</keyword>
<keyword id="KW-0813">Transport</keyword>
<accession>Q6FQN3</accession>
<proteinExistence type="evidence at transcript level"/>
<organism>
    <name type="scientific">Candida glabrata (strain ATCC 2001 / BCRC 20586 / JCM 3761 / NBRC 0622 / NRRL Y-65 / CBS 138)</name>
    <name type="common">Yeast</name>
    <name type="synonym">Nakaseomyces glabratus</name>
    <dbReference type="NCBI Taxonomy" id="284593"/>
    <lineage>
        <taxon>Eukaryota</taxon>
        <taxon>Fungi</taxon>
        <taxon>Dikarya</taxon>
        <taxon>Ascomycota</taxon>
        <taxon>Saccharomycotina</taxon>
        <taxon>Saccharomycetes</taxon>
        <taxon>Saccharomycetales</taxon>
        <taxon>Saccharomycetaceae</taxon>
        <taxon>Nakaseomyces</taxon>
    </lineage>
</organism>
<gene>
    <name evidence="10" type="primary">SNQ2</name>
    <name type="ordered locus">CAGL0I04862g</name>
</gene>
<feature type="chain" id="PRO_0000445244" description="ABC multidrug transporter SNQ2">
    <location>
        <begin position="1"/>
        <end position="1507"/>
    </location>
</feature>
<feature type="transmembrane region" description="Helical" evidence="1">
    <location>
        <begin position="522"/>
        <end position="542"/>
    </location>
</feature>
<feature type="transmembrane region" description="Helical" evidence="1">
    <location>
        <begin position="556"/>
        <end position="576"/>
    </location>
</feature>
<feature type="transmembrane region" description="Helical" evidence="1">
    <location>
        <begin position="605"/>
        <end position="625"/>
    </location>
</feature>
<feature type="transmembrane region" description="Helical" evidence="1">
    <location>
        <begin position="635"/>
        <end position="655"/>
    </location>
</feature>
<feature type="transmembrane region" description="Helical" evidence="1">
    <location>
        <begin position="665"/>
        <end position="685"/>
    </location>
</feature>
<feature type="transmembrane region" description="Helical" evidence="1">
    <location>
        <begin position="773"/>
        <end position="793"/>
    </location>
</feature>
<feature type="transmembrane region" description="Helical" evidence="1">
    <location>
        <begin position="1193"/>
        <end position="1213"/>
    </location>
</feature>
<feature type="transmembrane region" description="Helical" evidence="1">
    <location>
        <begin position="1220"/>
        <end position="1240"/>
    </location>
</feature>
<feature type="transmembrane region" description="Helical" evidence="1">
    <location>
        <begin position="1270"/>
        <end position="1290"/>
    </location>
</feature>
<feature type="transmembrane region" description="Helical" evidence="1">
    <location>
        <begin position="1314"/>
        <end position="1334"/>
    </location>
</feature>
<feature type="transmembrane region" description="Helical" evidence="1">
    <location>
        <begin position="1339"/>
        <end position="1359"/>
    </location>
</feature>
<feature type="transmembrane region" description="Helical" evidence="1">
    <location>
        <begin position="1459"/>
        <end position="1479"/>
    </location>
</feature>
<feature type="domain" description="ABC transporter 1" evidence="2">
    <location>
        <begin position="157"/>
        <end position="412"/>
    </location>
</feature>
<feature type="domain" description="ABC transporter 2" evidence="2">
    <location>
        <begin position="857"/>
        <end position="1099"/>
    </location>
</feature>
<feature type="region of interest" description="Disordered" evidence="4">
    <location>
        <begin position="1"/>
        <end position="73"/>
    </location>
</feature>
<feature type="compositionally biased region" description="Basic and acidic residues" evidence="4">
    <location>
        <begin position="41"/>
        <end position="55"/>
    </location>
</feature>
<feature type="binding site" evidence="2">
    <location>
        <begin position="893"/>
        <end position="900"/>
    </location>
    <ligand>
        <name>ATP</name>
        <dbReference type="ChEBI" id="CHEBI:30616"/>
    </ligand>
</feature>
<feature type="glycosylation site" description="N-linked (GlcNAc...) asparagine" evidence="3">
    <location>
        <position position="55"/>
    </location>
</feature>
<feature type="glycosylation site" description="N-linked (GlcNAc...) asparagine" evidence="3">
    <location>
        <position position="336"/>
    </location>
</feature>
<feature type="glycosylation site" description="N-linked (GlcNAc...) asparagine" evidence="3">
    <location>
        <position position="626"/>
    </location>
</feature>
<feature type="glycosylation site" description="N-linked (GlcNAc...) asparagine" evidence="3">
    <location>
        <position position="659"/>
    </location>
</feature>
<feature type="glycosylation site" description="N-linked (GlcNAc...) asparagine" evidence="3">
    <location>
        <position position="878"/>
    </location>
</feature>
<feature type="glycosylation site" description="N-linked (GlcNAc...) asparagine" evidence="3">
    <location>
        <position position="1311"/>
    </location>
</feature>
<feature type="glycosylation site" description="N-linked (GlcNAc...) asparagine" evidence="3">
    <location>
        <position position="1428"/>
    </location>
</feature>
<protein>
    <recommendedName>
        <fullName evidence="10">ABC multidrug transporter SNQ2</fullName>
    </recommendedName>
</protein>
<name>SNQ2_CANGA</name>
<evidence type="ECO:0000255" key="1"/>
<evidence type="ECO:0000255" key="2">
    <source>
        <dbReference type="PROSITE-ProRule" id="PRU00434"/>
    </source>
</evidence>
<evidence type="ECO:0000255" key="3">
    <source>
        <dbReference type="PROSITE-ProRule" id="PRU00498"/>
    </source>
</evidence>
<evidence type="ECO:0000256" key="4">
    <source>
        <dbReference type="SAM" id="MobiDB-lite"/>
    </source>
</evidence>
<evidence type="ECO:0000269" key="5">
    <source>
    </source>
</evidence>
<evidence type="ECO:0000269" key="6">
    <source>
    </source>
</evidence>
<evidence type="ECO:0000269" key="7">
    <source>
    </source>
</evidence>
<evidence type="ECO:0000269" key="8">
    <source>
    </source>
</evidence>
<evidence type="ECO:0000269" key="9">
    <source>
    </source>
</evidence>
<evidence type="ECO:0000303" key="10">
    <source>
    </source>
</evidence>
<evidence type="ECO:0000305" key="11"/>